<feature type="chain" id="PRO_0000318682" description="Collectin-12">
    <location>
        <begin position="1"/>
        <end position="742"/>
    </location>
</feature>
<feature type="topological domain" description="Cytoplasmic" evidence="2">
    <location>
        <begin position="1"/>
        <end position="37"/>
    </location>
</feature>
<feature type="transmembrane region" description="Helical; Signal-anchor for type II membrane protein" evidence="2">
    <location>
        <begin position="38"/>
        <end position="58"/>
    </location>
</feature>
<feature type="topological domain" description="Extracellular" evidence="2">
    <location>
        <begin position="59"/>
        <end position="742"/>
    </location>
</feature>
<feature type="domain" description="Collagen-like 1">
    <location>
        <begin position="452"/>
        <end position="511"/>
    </location>
</feature>
<feature type="domain" description="Collagen-like 2">
    <location>
        <begin position="527"/>
        <end position="586"/>
    </location>
</feature>
<feature type="domain" description="C-type lectin" evidence="3">
    <location>
        <begin position="614"/>
        <end position="731"/>
    </location>
</feature>
<feature type="region of interest" description="Disordered" evidence="4">
    <location>
        <begin position="439"/>
        <end position="608"/>
    </location>
</feature>
<feature type="coiled-coil region" evidence="2">
    <location>
        <begin position="73"/>
        <end position="142"/>
    </location>
</feature>
<feature type="coiled-coil region" evidence="2">
    <location>
        <begin position="205"/>
        <end position="254"/>
    </location>
</feature>
<feature type="compositionally biased region" description="Low complexity" evidence="4">
    <location>
        <begin position="501"/>
        <end position="514"/>
    </location>
</feature>
<feature type="compositionally biased region" description="Pro residues" evidence="4">
    <location>
        <begin position="516"/>
        <end position="532"/>
    </location>
</feature>
<feature type="compositionally biased region" description="Low complexity" evidence="4">
    <location>
        <begin position="534"/>
        <end position="556"/>
    </location>
</feature>
<feature type="compositionally biased region" description="Pro residues" evidence="4">
    <location>
        <begin position="571"/>
        <end position="585"/>
    </location>
</feature>
<feature type="binding site">
    <location>
        <position position="644"/>
    </location>
    <ligand>
        <name>Ca(2+)</name>
        <dbReference type="ChEBI" id="CHEBI:29108"/>
        <label>1</label>
    </ligand>
</feature>
<feature type="binding site">
    <location>
        <position position="646"/>
    </location>
    <ligand>
        <name>Ca(2+)</name>
        <dbReference type="ChEBI" id="CHEBI:29108"/>
        <label>1</label>
    </ligand>
</feature>
<feature type="binding site">
    <location>
        <position position="650"/>
    </location>
    <ligand>
        <name>Ca(2+)</name>
        <dbReference type="ChEBI" id="CHEBI:29108"/>
        <label>1</label>
    </ligand>
</feature>
<feature type="binding site">
    <location>
        <position position="670"/>
    </location>
    <ligand>
        <name>Ca(2+)</name>
        <dbReference type="ChEBI" id="CHEBI:29108"/>
        <label>2</label>
    </ligand>
</feature>
<feature type="binding site">
    <location>
        <position position="674"/>
    </location>
    <ligand>
        <name>Ca(2+)</name>
        <dbReference type="ChEBI" id="CHEBI:29108"/>
        <label>2</label>
    </ligand>
</feature>
<feature type="binding site">
    <location>
        <position position="691"/>
    </location>
    <ligand>
        <name>a carbohydrate</name>
        <dbReference type="ChEBI" id="CHEBI:16646"/>
    </ligand>
</feature>
<feature type="binding site">
    <location>
        <position position="694"/>
    </location>
    <ligand>
        <name>a carbohydrate</name>
        <dbReference type="ChEBI" id="CHEBI:16646"/>
    </ligand>
</feature>
<feature type="binding site">
    <location>
        <position position="694"/>
    </location>
    <ligand>
        <name>Ca(2+)</name>
        <dbReference type="ChEBI" id="CHEBI:29108"/>
        <label>3</label>
    </ligand>
</feature>
<feature type="binding site">
    <location>
        <position position="696"/>
    </location>
    <ligand>
        <name>a carbohydrate</name>
        <dbReference type="ChEBI" id="CHEBI:16646"/>
    </ligand>
</feature>
<feature type="binding site">
    <location>
        <position position="696"/>
    </location>
    <ligand>
        <name>Ca(2+)</name>
        <dbReference type="ChEBI" id="CHEBI:29108"/>
        <label>3</label>
    </ligand>
</feature>
<feature type="binding site">
    <location>
        <position position="697"/>
    </location>
    <ligand>
        <name>Ca(2+)</name>
        <dbReference type="ChEBI" id="CHEBI:29108"/>
        <label>2</label>
    </ligand>
</feature>
<feature type="binding site">
    <location>
        <position position="706"/>
    </location>
    <ligand>
        <name>a carbohydrate</name>
        <dbReference type="ChEBI" id="CHEBI:16646"/>
    </ligand>
</feature>
<feature type="binding site">
    <location>
        <position position="706"/>
    </location>
    <ligand>
        <name>Ca(2+)</name>
        <dbReference type="ChEBI" id="CHEBI:29108"/>
        <label>2</label>
    </ligand>
</feature>
<feature type="binding site">
    <location>
        <position position="706"/>
    </location>
    <ligand>
        <name>Ca(2+)</name>
        <dbReference type="ChEBI" id="CHEBI:29108"/>
        <label>3</label>
    </ligand>
</feature>
<feature type="binding site">
    <location>
        <position position="707"/>
    </location>
    <ligand>
        <name>Ca(2+)</name>
        <dbReference type="ChEBI" id="CHEBI:29108"/>
        <label>2</label>
    </ligand>
</feature>
<feature type="binding site">
    <location>
        <position position="718"/>
    </location>
    <ligand>
        <name>a carbohydrate</name>
        <dbReference type="ChEBI" id="CHEBI:16646"/>
    </ligand>
</feature>
<feature type="binding site">
    <location>
        <position position="718"/>
    </location>
    <ligand>
        <name>Ca(2+)</name>
        <dbReference type="ChEBI" id="CHEBI:29108"/>
        <label>3</label>
    </ligand>
</feature>
<feature type="binding site">
    <location>
        <position position="719"/>
    </location>
    <ligand>
        <name>a carbohydrate</name>
        <dbReference type="ChEBI" id="CHEBI:16646"/>
    </ligand>
</feature>
<feature type="binding site">
    <location>
        <position position="719"/>
    </location>
    <ligand>
        <name>Ca(2+)</name>
        <dbReference type="ChEBI" id="CHEBI:29108"/>
        <label>3</label>
    </ligand>
</feature>
<feature type="binding site">
    <location>
        <position position="731"/>
    </location>
    <ligand>
        <name>Ca(2+)</name>
        <dbReference type="ChEBI" id="CHEBI:29108"/>
        <label>1</label>
    </ligand>
</feature>
<feature type="glycosylation site" description="N-linked (GlcNAc...) asparagine" evidence="9">
    <location>
        <position position="67"/>
    </location>
</feature>
<feature type="glycosylation site" description="N-linked (GlcNAc...) asparagine" evidence="9">
    <location>
        <position position="159"/>
    </location>
</feature>
<feature type="glycosylation site" description="N-linked (GlcNAc...) asparagine" evidence="9">
    <location>
        <position position="168"/>
    </location>
</feature>
<feature type="glycosylation site" description="N-linked (GlcNAc...) asparagine" evidence="9">
    <location>
        <position position="271"/>
    </location>
</feature>
<feature type="disulfide bond" evidence="3 8">
    <location>
        <begin position="607"/>
        <end position="618"/>
    </location>
</feature>
<feature type="disulfide bond" evidence="3 8">
    <location>
        <begin position="635"/>
        <end position="730"/>
    </location>
</feature>
<feature type="disulfide bond" evidence="3 8">
    <location>
        <begin position="708"/>
        <end position="722"/>
    </location>
</feature>
<feature type="sequence conflict" description="In Ref. 1; BAB82497." evidence="10" ref="1">
    <original>Q</original>
    <variation>H</variation>
    <location>
        <position position="22"/>
    </location>
</feature>
<feature type="sequence conflict" description="In Ref. 1; BAB82497." evidence="10" ref="1">
    <original>K</original>
    <variation>I</variation>
    <location>
        <position position="31"/>
    </location>
</feature>
<feature type="sequence conflict" description="In Ref. 1; BAB82497." evidence="10" ref="1">
    <original>T</original>
    <variation>S</variation>
    <location>
        <position position="69"/>
    </location>
</feature>
<feature type="sequence conflict" description="In Ref. 3; BAC31361." evidence="10" ref="3">
    <original>Q</original>
    <variation>L</variation>
    <location>
        <position position="182"/>
    </location>
</feature>
<feature type="sequence conflict" description="In Ref. 1; BAB82497." evidence="10" ref="1">
    <original>S</original>
    <variation>N</variation>
    <location>
        <position position="186"/>
    </location>
</feature>
<feature type="sequence conflict" description="In Ref. 1; BAB82497." evidence="10" ref="1">
    <original>R</original>
    <variation>W</variation>
    <location>
        <position position="368"/>
    </location>
</feature>
<feature type="sequence conflict" description="In Ref. 1; BAB82497." evidence="10" ref="1">
    <original>F</original>
    <variation>L</variation>
    <location>
        <position position="628"/>
    </location>
</feature>
<feature type="strand" evidence="11">
    <location>
        <begin position="612"/>
        <end position="614"/>
    </location>
</feature>
<feature type="strand" evidence="11">
    <location>
        <begin position="617"/>
        <end position="621"/>
    </location>
</feature>
<feature type="helix" evidence="11">
    <location>
        <begin position="628"/>
        <end position="637"/>
    </location>
</feature>
<feature type="helix" evidence="11">
    <location>
        <begin position="648"/>
        <end position="656"/>
    </location>
</feature>
<feature type="strand" evidence="11">
    <location>
        <begin position="660"/>
        <end position="662"/>
    </location>
</feature>
<feature type="strand" evidence="11">
    <location>
        <begin position="664"/>
        <end position="669"/>
    </location>
</feature>
<feature type="strand" evidence="11">
    <location>
        <begin position="671"/>
        <end position="673"/>
    </location>
</feature>
<feature type="turn" evidence="11">
    <location>
        <begin position="698"/>
        <end position="702"/>
    </location>
</feature>
<feature type="strand" evidence="11">
    <location>
        <begin position="708"/>
        <end position="711"/>
    </location>
</feature>
<feature type="helix" evidence="11">
    <location>
        <begin position="713"/>
        <end position="715"/>
    </location>
</feature>
<feature type="strand" evidence="11">
    <location>
        <begin position="717"/>
        <end position="720"/>
    </location>
</feature>
<feature type="strand" evidence="11">
    <location>
        <begin position="726"/>
        <end position="733"/>
    </location>
</feature>
<keyword id="KW-0002">3D-structure</keyword>
<keyword id="KW-0106">Calcium</keyword>
<keyword id="KW-0175">Coiled coil</keyword>
<keyword id="KW-0176">Collagen</keyword>
<keyword id="KW-1015">Disulfide bond</keyword>
<keyword id="KW-0325">Glycoprotein</keyword>
<keyword id="KW-0430">Lectin</keyword>
<keyword id="KW-0472">Membrane</keyword>
<keyword id="KW-0479">Metal-binding</keyword>
<keyword id="KW-0675">Receptor</keyword>
<keyword id="KW-1185">Reference proteome</keyword>
<keyword id="KW-0677">Repeat</keyword>
<keyword id="KW-0735">Signal-anchor</keyword>
<keyword id="KW-0812">Transmembrane</keyword>
<keyword id="KW-1133">Transmembrane helix</keyword>
<sequence>MKDDFAEEEEVQSFGYKRFGIQEGTQCTKCKNNWALKFSIVLLYILCALLTITVAILGYKVVEKMDNVTDGMETSHQTYDNKLTAVESDLKKLGDQAGKKALSTNSELSTFRSDILDLRQQLQEITEKTSKNKDTLEKLQANGDSLVDRQSQLKETLQNNSFLITTVNKTLQAYNGYVTNLQQDTSVLQGNLQSQMYSQSVVIMNLNNLNLTQVQQRNLISNLQQSVDDTSLAIQRIKNDFQNLQQVFLQAKKDTDWLKEKVQSLQTLAANNSALAKANNDTLEDMNSQLSSFTGQMDNITTISQANEQSLKDLQDLHKDTENRTAVKFSQLEERFQVFETDIVNIISNISYTAHHLRTLTSNLNDVRTTCTDTLTRHTDDLTSLNNTLVNIRLDSISLRMQQDMMRSKLDTEVANLSVVMEEMKLVDSKHGQLIKNFTILQGPPGPRGPKGDRGSQGPPGPTGNKGQKGEKGEPGPPGPAGERGTIGPVGPPGERGSKGSKGSQGPKGSRGSPGKPGPQGPSGDPGPPGPPGKDGLPGPQGPPGFQGLQGTVGEPGVPGPRGLPGLPGVPGMPGPKGPPGPPGPSGAMEPLALQNEPTPASEVNGCPPHWKNFTDKCYYFSLEKEIFEDAKLFCEDKSSHLVFINSREEQQWIKKHTVGRESHWIGLTDSEQESEWKWLDGSPVDYKNWKAGQPDNWGSGHGPGEDCAGLIYAGQWNDFQCDEINNFICEKEREAVPSSIL</sequence>
<accession>Q8K4Q8</accession>
<accession>Q3TYT8</accession>
<accession>Q8C979</accession>
<accession>Q8VIF6</accession>
<protein>
    <recommendedName>
        <fullName>Collectin-12</fullName>
    </recommendedName>
    <alternativeName>
        <fullName>Collectin placenta protein 1</fullName>
        <shortName>CL-P1</shortName>
    </alternativeName>
    <alternativeName>
        <fullName>Scavenger receptor with C-type lectin</fullName>
    </alternativeName>
</protein>
<gene>
    <name type="primary">Colec12</name>
    <name type="synonym">Clp1</name>
    <name type="synonym">Srcl</name>
</gene>
<name>COL12_MOUSE</name>
<comment type="function">
    <text evidence="1 6">Scavenger receptor that displays several functions associated with host defense. Promotes binding and phagocytosis of Gram-positive, Gram-negative bacteria and yeast. Also binds to sialyl Lewis X or a trisaccharide and asialo-orosomucoid (ASOR). Mediates the recognition, internalization and degradation of oxidatively modified low density lipoprotein (oxLDL) by vascular endothelial cells (By similarity). Binds to several carbohydrates including Gal-type ligands, D-galactose, L- and D-fucose, GalNAc, T and Tn antigens in a calcium-dependent manner and internalizes specifically GalNAc in nurse-like cells (By similarity).</text>
</comment>
<comment type="subunit">
    <text evidence="1 7 8">The extracellular domain forms a stable trimer (By similarity). The extracellular domain interacts with fibrillar amyloid-beta peptide.</text>
</comment>
<comment type="subcellular location">
    <subcellularLocation>
        <location evidence="1">Membrane</location>
        <topology evidence="1">Single-pass type II membrane protein</topology>
    </subcellularLocation>
    <text evidence="1">Forms clusters on the cell surface.</text>
</comment>
<comment type="tissue specificity">
    <text evidence="5 6 7">Expressed in vascular endothelial cells in the heart, in perivascular macrophage and smooth muscle cells. Expressed in plaques-surrounding reactive astrocytes located in cerebral cortex and hippocampus and in leptomeningeal vessels showing characteristics of cerebral amyloid angiopathy (CAA) in a double transgenic mouse model of Alzheimer disease (at protein level). Strongly expressed in lung. Moderately expressed in heart, skeletal muscle, spleen, liver, brain, colon, testis, stomach and kidney. Expressed in neonatal astrocytes. Expressed in reactive astrocytes and vascular/perivascular cells in the brain of a double transgenic mouse model of Alzheimer disease.</text>
</comment>
<comment type="developmental stage">
    <text evidence="6">Expressed in embryo at 9 dpc, increases progressively to a peak at 14 dpc and gradually decreases until 19 dpc.</text>
</comment>
<comment type="induction">
    <text evidence="7">Up-regulated in activated microglia and by fibrillar amyloid-beta peptide in activated astrocytes.</text>
</comment>
<reference key="1">
    <citation type="journal article" date="2001" name="Biochim. Biophys. Acta">
        <title>Molecular cloning of a mouse scavenger receptor with C-type lectin (SRCL), a novel member of the scavenger receptor family.</title>
        <authorList>
            <person name="Nakamura K."/>
            <person name="Funakoshi H."/>
            <person name="Tokunaga F."/>
            <person name="Nakamura T."/>
        </authorList>
    </citation>
    <scope>NUCLEOTIDE SEQUENCE [MRNA]</scope>
    <scope>FUNCTION</scope>
    <scope>DEVELOPMENTAL STAGE</scope>
    <scope>TISSUE SPECIFICITY</scope>
    <source>
        <tissue>Embryo</tissue>
    </source>
</reference>
<reference key="2">
    <citation type="submission" date="2002-01" db="EMBL/GenBank/DDBJ databases">
        <title>cDNA cloning of mouse CL-P1 gene.</title>
        <authorList>
            <person name="Ohtani K."/>
            <person name="Suzuki Y."/>
            <person name="Eda S."/>
            <person name="Kawai T."/>
            <person name="Kase T."/>
            <person name="Keshi H."/>
            <person name="Sakai Y."/>
            <person name="Fukuoh A."/>
            <person name="Sakamoto T."/>
            <person name="Itabe H."/>
            <person name="Suzutani T."/>
            <person name="Ogasawara M."/>
            <person name="Yoshida I."/>
            <person name="Wakamiya N."/>
        </authorList>
    </citation>
    <scope>NUCLEOTIDE SEQUENCE [MRNA]</scope>
</reference>
<reference key="3">
    <citation type="journal article" date="2005" name="Science">
        <title>The transcriptional landscape of the mammalian genome.</title>
        <authorList>
            <person name="Carninci P."/>
            <person name="Kasukawa T."/>
            <person name="Katayama S."/>
            <person name="Gough J."/>
            <person name="Frith M.C."/>
            <person name="Maeda N."/>
            <person name="Oyama R."/>
            <person name="Ravasi T."/>
            <person name="Lenhard B."/>
            <person name="Wells C."/>
            <person name="Kodzius R."/>
            <person name="Shimokawa K."/>
            <person name="Bajic V.B."/>
            <person name="Brenner S.E."/>
            <person name="Batalov S."/>
            <person name="Forrest A.R."/>
            <person name="Zavolan M."/>
            <person name="Davis M.J."/>
            <person name="Wilming L.G."/>
            <person name="Aidinis V."/>
            <person name="Allen J.E."/>
            <person name="Ambesi-Impiombato A."/>
            <person name="Apweiler R."/>
            <person name="Aturaliya R.N."/>
            <person name="Bailey T.L."/>
            <person name="Bansal M."/>
            <person name="Baxter L."/>
            <person name="Beisel K.W."/>
            <person name="Bersano T."/>
            <person name="Bono H."/>
            <person name="Chalk A.M."/>
            <person name="Chiu K.P."/>
            <person name="Choudhary V."/>
            <person name="Christoffels A."/>
            <person name="Clutterbuck D.R."/>
            <person name="Crowe M.L."/>
            <person name="Dalla E."/>
            <person name="Dalrymple B.P."/>
            <person name="de Bono B."/>
            <person name="Della Gatta G."/>
            <person name="di Bernardo D."/>
            <person name="Down T."/>
            <person name="Engstrom P."/>
            <person name="Fagiolini M."/>
            <person name="Faulkner G."/>
            <person name="Fletcher C.F."/>
            <person name="Fukushima T."/>
            <person name="Furuno M."/>
            <person name="Futaki S."/>
            <person name="Gariboldi M."/>
            <person name="Georgii-Hemming P."/>
            <person name="Gingeras T.R."/>
            <person name="Gojobori T."/>
            <person name="Green R.E."/>
            <person name="Gustincich S."/>
            <person name="Harbers M."/>
            <person name="Hayashi Y."/>
            <person name="Hensch T.K."/>
            <person name="Hirokawa N."/>
            <person name="Hill D."/>
            <person name="Huminiecki L."/>
            <person name="Iacono M."/>
            <person name="Ikeo K."/>
            <person name="Iwama A."/>
            <person name="Ishikawa T."/>
            <person name="Jakt M."/>
            <person name="Kanapin A."/>
            <person name="Katoh M."/>
            <person name="Kawasawa Y."/>
            <person name="Kelso J."/>
            <person name="Kitamura H."/>
            <person name="Kitano H."/>
            <person name="Kollias G."/>
            <person name="Krishnan S.P."/>
            <person name="Kruger A."/>
            <person name="Kummerfeld S.K."/>
            <person name="Kurochkin I.V."/>
            <person name="Lareau L.F."/>
            <person name="Lazarevic D."/>
            <person name="Lipovich L."/>
            <person name="Liu J."/>
            <person name="Liuni S."/>
            <person name="McWilliam S."/>
            <person name="Madan Babu M."/>
            <person name="Madera M."/>
            <person name="Marchionni L."/>
            <person name="Matsuda H."/>
            <person name="Matsuzawa S."/>
            <person name="Miki H."/>
            <person name="Mignone F."/>
            <person name="Miyake S."/>
            <person name="Morris K."/>
            <person name="Mottagui-Tabar S."/>
            <person name="Mulder N."/>
            <person name="Nakano N."/>
            <person name="Nakauchi H."/>
            <person name="Ng P."/>
            <person name="Nilsson R."/>
            <person name="Nishiguchi S."/>
            <person name="Nishikawa S."/>
            <person name="Nori F."/>
            <person name="Ohara O."/>
            <person name="Okazaki Y."/>
            <person name="Orlando V."/>
            <person name="Pang K.C."/>
            <person name="Pavan W.J."/>
            <person name="Pavesi G."/>
            <person name="Pesole G."/>
            <person name="Petrovsky N."/>
            <person name="Piazza S."/>
            <person name="Reed J."/>
            <person name="Reid J.F."/>
            <person name="Ring B.Z."/>
            <person name="Ringwald M."/>
            <person name="Rost B."/>
            <person name="Ruan Y."/>
            <person name="Salzberg S.L."/>
            <person name="Sandelin A."/>
            <person name="Schneider C."/>
            <person name="Schoenbach C."/>
            <person name="Sekiguchi K."/>
            <person name="Semple C.A."/>
            <person name="Seno S."/>
            <person name="Sessa L."/>
            <person name="Sheng Y."/>
            <person name="Shibata Y."/>
            <person name="Shimada H."/>
            <person name="Shimada K."/>
            <person name="Silva D."/>
            <person name="Sinclair B."/>
            <person name="Sperling S."/>
            <person name="Stupka E."/>
            <person name="Sugiura K."/>
            <person name="Sultana R."/>
            <person name="Takenaka Y."/>
            <person name="Taki K."/>
            <person name="Tammoja K."/>
            <person name="Tan S.L."/>
            <person name="Tang S."/>
            <person name="Taylor M.S."/>
            <person name="Tegner J."/>
            <person name="Teichmann S.A."/>
            <person name="Ueda H.R."/>
            <person name="van Nimwegen E."/>
            <person name="Verardo R."/>
            <person name="Wei C.L."/>
            <person name="Yagi K."/>
            <person name="Yamanishi H."/>
            <person name="Zabarovsky E."/>
            <person name="Zhu S."/>
            <person name="Zimmer A."/>
            <person name="Hide W."/>
            <person name="Bult C."/>
            <person name="Grimmond S.M."/>
            <person name="Teasdale R.D."/>
            <person name="Liu E.T."/>
            <person name="Brusic V."/>
            <person name="Quackenbush J."/>
            <person name="Wahlestedt C."/>
            <person name="Mattick J.S."/>
            <person name="Hume D.A."/>
            <person name="Kai C."/>
            <person name="Sasaki D."/>
            <person name="Tomaru Y."/>
            <person name="Fukuda S."/>
            <person name="Kanamori-Katayama M."/>
            <person name="Suzuki M."/>
            <person name="Aoki J."/>
            <person name="Arakawa T."/>
            <person name="Iida J."/>
            <person name="Imamura K."/>
            <person name="Itoh M."/>
            <person name="Kato T."/>
            <person name="Kawaji H."/>
            <person name="Kawagashira N."/>
            <person name="Kawashima T."/>
            <person name="Kojima M."/>
            <person name="Kondo S."/>
            <person name="Konno H."/>
            <person name="Nakano K."/>
            <person name="Ninomiya N."/>
            <person name="Nishio T."/>
            <person name="Okada M."/>
            <person name="Plessy C."/>
            <person name="Shibata K."/>
            <person name="Shiraki T."/>
            <person name="Suzuki S."/>
            <person name="Tagami M."/>
            <person name="Waki K."/>
            <person name="Watahiki A."/>
            <person name="Okamura-Oho Y."/>
            <person name="Suzuki H."/>
            <person name="Kawai J."/>
            <person name="Hayashizaki Y."/>
        </authorList>
    </citation>
    <scope>NUCLEOTIDE SEQUENCE [LARGE SCALE MRNA]</scope>
    <source>
        <strain>C57BL/6J</strain>
        <tissue>Cerebellum</tissue>
        <tissue>Inner ear</tissue>
    </source>
</reference>
<reference key="4">
    <citation type="journal article" date="2004" name="Genome Res.">
        <title>The status, quality, and expansion of the NIH full-length cDNA project: the Mammalian Gene Collection (MGC).</title>
        <authorList>
            <consortium name="The MGC Project Team"/>
        </authorList>
    </citation>
    <scope>NUCLEOTIDE SEQUENCE [LARGE SCALE MRNA]</scope>
    <source>
        <strain>NMRI</strain>
        <tissue>Mammary tumor</tissue>
    </source>
</reference>
<reference key="5">
    <citation type="journal article" date="2001" name="J. Biol. Chem.">
        <title>The membrane-type collectin CL-P1 is a scavenger receptor on vascular endothelial cells.</title>
        <authorList>
            <person name="Ohtani K."/>
            <person name="Suzuki Y."/>
            <person name="Eda S."/>
            <person name="Kawai T."/>
            <person name="Kase T."/>
            <person name="Keshi H."/>
            <person name="Sakai Y."/>
            <person name="Fukuoh A."/>
            <person name="Sakamoto T."/>
            <person name="Itabe H."/>
            <person name="Suzutani T."/>
            <person name="Ogasawara M."/>
            <person name="Yoshida I."/>
            <person name="Wakamiya N."/>
        </authorList>
    </citation>
    <scope>TISSUE SPECIFICITY</scope>
</reference>
<reference key="6">
    <citation type="journal article" date="2006" name="J. Neurosci. Res.">
        <title>Possible role of scavenger receptor SRCL in the clearance of amyloid-beta in Alzheimer's disease.</title>
        <authorList>
            <person name="Nakamura K."/>
            <person name="Ohya W."/>
            <person name="Funakoshi H."/>
            <person name="Sakaguchi G."/>
            <person name="Kato A."/>
            <person name="Takeda M."/>
            <person name="Kudo T."/>
            <person name="Nakamura T."/>
        </authorList>
    </citation>
    <scope>INTERACTION WITH FIBRILLAR AMYLOID-BETA PEPTIDE</scope>
    <scope>INDUCTION</scope>
    <scope>TISSUE SPECIFICITY</scope>
</reference>
<reference key="7">
    <citation type="journal article" date="2009" name="Mol. Cell. Proteomics">
        <title>The mouse C2C12 myoblast cell surface N-linked glycoproteome: identification, glycosite occupancy, and membrane orientation.</title>
        <authorList>
            <person name="Gundry R.L."/>
            <person name="Raginski K."/>
            <person name="Tarasova Y."/>
            <person name="Tchernyshyov I."/>
            <person name="Bausch-Fluck D."/>
            <person name="Elliott S.T."/>
            <person name="Boheler K.R."/>
            <person name="Van Eyk J.E."/>
            <person name="Wollscheid B."/>
        </authorList>
    </citation>
    <scope>GLYCOSYLATION [LARGE SCALE ANALYSIS] AT ASN-67; ASN-159; ASN-168 AND ASN-271</scope>
    <source>
        <tissue>Myoblast</tissue>
    </source>
</reference>
<reference key="8">
    <citation type="journal article" date="2010" name="Cell">
        <title>A tissue-specific atlas of mouse protein phosphorylation and expression.</title>
        <authorList>
            <person name="Huttlin E.L."/>
            <person name="Jedrychowski M.P."/>
            <person name="Elias J.E."/>
            <person name="Goswami T."/>
            <person name="Rad R."/>
            <person name="Beausoleil S.A."/>
            <person name="Villen J."/>
            <person name="Haas W."/>
            <person name="Sowa M.E."/>
            <person name="Gygi S.P."/>
        </authorList>
    </citation>
    <scope>IDENTIFICATION BY MASS SPECTROMETRY [LARGE SCALE ANALYSIS]</scope>
    <source>
        <tissue>Kidney</tissue>
        <tissue>Lung</tissue>
    </source>
</reference>
<reference key="9">
    <citation type="journal article" date="2007" name="J. Biol. Chem.">
        <title>Scavenger receptor C-type lectin binds to the leukocyte cell surface glycan Lewis X by a novel mechanism.</title>
        <authorList>
            <person name="Feinberg H."/>
            <person name="Taylor M.E."/>
            <person name="Weis W.I."/>
        </authorList>
    </citation>
    <scope>X-RAY CRYSTALLOGRAPHY (1.95 ANGSTROMS) OF 603-742 IN COMPLEX WITH GLYCAN LEWIS X AND CALCIUM IONS</scope>
    <scope>DISULFIDE BONDS</scope>
</reference>
<evidence type="ECO:0000250" key="1"/>
<evidence type="ECO:0000255" key="2"/>
<evidence type="ECO:0000255" key="3">
    <source>
        <dbReference type="PROSITE-ProRule" id="PRU00040"/>
    </source>
</evidence>
<evidence type="ECO:0000256" key="4">
    <source>
        <dbReference type="SAM" id="MobiDB-lite"/>
    </source>
</evidence>
<evidence type="ECO:0000269" key="5">
    <source>
    </source>
</evidence>
<evidence type="ECO:0000269" key="6">
    <source>
    </source>
</evidence>
<evidence type="ECO:0000269" key="7">
    <source>
    </source>
</evidence>
<evidence type="ECO:0000269" key="8">
    <source>
    </source>
</evidence>
<evidence type="ECO:0000269" key="9">
    <source>
    </source>
</evidence>
<evidence type="ECO:0000305" key="10"/>
<evidence type="ECO:0007829" key="11">
    <source>
        <dbReference type="PDB" id="2OX9"/>
    </source>
</evidence>
<dbReference type="EMBL" id="AB038519">
    <property type="protein sequence ID" value="BAB82497.1"/>
    <property type="molecule type" value="mRNA"/>
</dbReference>
<dbReference type="EMBL" id="AB078434">
    <property type="protein sequence ID" value="BAC05523.1"/>
    <property type="molecule type" value="mRNA"/>
</dbReference>
<dbReference type="EMBL" id="AK042772">
    <property type="protein sequence ID" value="BAC31361.1"/>
    <property type="molecule type" value="mRNA"/>
</dbReference>
<dbReference type="EMBL" id="AK158366">
    <property type="protein sequence ID" value="BAE34474.1"/>
    <property type="molecule type" value="mRNA"/>
</dbReference>
<dbReference type="EMBL" id="BC057936">
    <property type="protein sequence ID" value="AAH57936.1"/>
    <property type="molecule type" value="mRNA"/>
</dbReference>
<dbReference type="CCDS" id="CCDS37732.1"/>
<dbReference type="RefSeq" id="NP_569716.2">
    <property type="nucleotide sequence ID" value="NM_130449.2"/>
</dbReference>
<dbReference type="PDB" id="2OX9">
    <property type="method" value="X-ray"/>
    <property type="resolution" value="1.95 A"/>
    <property type="chains" value="A/B/C/D=603-742"/>
</dbReference>
<dbReference type="PDBsum" id="2OX9"/>
<dbReference type="SMR" id="Q8K4Q8"/>
<dbReference type="BioGRID" id="228316">
    <property type="interactions" value="1"/>
</dbReference>
<dbReference type="FunCoup" id="Q8K4Q8">
    <property type="interactions" value="265"/>
</dbReference>
<dbReference type="STRING" id="10090.ENSMUSP00000157132"/>
<dbReference type="UniLectin" id="Q8K4Q8"/>
<dbReference type="GlyConnect" id="2222">
    <property type="glycosylation" value="1 N-Linked glycan (1 site)"/>
</dbReference>
<dbReference type="GlyCosmos" id="Q8K4Q8">
    <property type="glycosylation" value="5 sites, 1 glycan"/>
</dbReference>
<dbReference type="GlyGen" id="Q8K4Q8">
    <property type="glycosylation" value="10 sites, 7 N-linked glycans (7 sites), 1 O-linked glycan (1 site)"/>
</dbReference>
<dbReference type="iPTMnet" id="Q8K4Q8"/>
<dbReference type="PhosphoSitePlus" id="Q8K4Q8"/>
<dbReference type="SwissPalm" id="Q8K4Q8"/>
<dbReference type="PaxDb" id="10090-ENSMUSP00000043220"/>
<dbReference type="PeptideAtlas" id="Q8K4Q8"/>
<dbReference type="ProteomicsDB" id="283425"/>
<dbReference type="Pumba" id="Q8K4Q8"/>
<dbReference type="Antibodypedia" id="21901">
    <property type="antibodies" value="227 antibodies from 26 providers"/>
</dbReference>
<dbReference type="DNASU" id="140792"/>
<dbReference type="Ensembl" id="ENSMUST00000234965.2">
    <property type="protein sequence ID" value="ENSMUSP00000157132.2"/>
    <property type="gene ID" value="ENSMUSG00000036103.10"/>
</dbReference>
<dbReference type="GeneID" id="140792"/>
<dbReference type="KEGG" id="mmu:140792"/>
<dbReference type="UCSC" id="uc008eak.2">
    <property type="organism name" value="mouse"/>
</dbReference>
<dbReference type="AGR" id="MGI:2152907"/>
<dbReference type="CTD" id="81035"/>
<dbReference type="MGI" id="MGI:2152907">
    <property type="gene designation" value="Colec12"/>
</dbReference>
<dbReference type="VEuPathDB" id="HostDB:ENSMUSG00000036103"/>
<dbReference type="eggNOG" id="ENOG502QQKQ">
    <property type="taxonomic scope" value="Eukaryota"/>
</dbReference>
<dbReference type="GeneTree" id="ENSGT00950000183074"/>
<dbReference type="HOGENOM" id="CLU_022132_0_0_1"/>
<dbReference type="InParanoid" id="Q8K4Q8"/>
<dbReference type="OMA" id="EANKFCK"/>
<dbReference type="OrthoDB" id="9896688at2759"/>
<dbReference type="PhylomeDB" id="Q8K4Q8"/>
<dbReference type="TreeFam" id="TF332426"/>
<dbReference type="BioGRID-ORCS" id="140792">
    <property type="hits" value="0 hits in 77 CRISPR screens"/>
</dbReference>
<dbReference type="ChiTaRS" id="Colec12">
    <property type="organism name" value="mouse"/>
</dbReference>
<dbReference type="EvolutionaryTrace" id="Q8K4Q8"/>
<dbReference type="PRO" id="PR:Q8K4Q8"/>
<dbReference type="Proteomes" id="UP000000589">
    <property type="component" value="Chromosome 18"/>
</dbReference>
<dbReference type="RNAct" id="Q8K4Q8">
    <property type="molecule type" value="protein"/>
</dbReference>
<dbReference type="Bgee" id="ENSMUSG00000036103">
    <property type="expression patterns" value="Expressed in humerus cartilage element and 214 other cell types or tissues"/>
</dbReference>
<dbReference type="ExpressionAtlas" id="Q8K4Q8">
    <property type="expression patterns" value="baseline and differential"/>
</dbReference>
<dbReference type="GO" id="GO:0005581">
    <property type="term" value="C:collagen trimer"/>
    <property type="evidence" value="ECO:0007669"/>
    <property type="project" value="UniProtKB-KW"/>
</dbReference>
<dbReference type="GO" id="GO:0062023">
    <property type="term" value="C:collagen-containing extracellular matrix"/>
    <property type="evidence" value="ECO:0007005"/>
    <property type="project" value="BHF-UCL"/>
</dbReference>
<dbReference type="GO" id="GO:0016020">
    <property type="term" value="C:membrane"/>
    <property type="evidence" value="ECO:0000250"/>
    <property type="project" value="MGI"/>
</dbReference>
<dbReference type="GO" id="GO:0030246">
    <property type="term" value="F:carbohydrate binding"/>
    <property type="evidence" value="ECO:0000250"/>
    <property type="project" value="MGI"/>
</dbReference>
<dbReference type="GO" id="GO:0030169">
    <property type="term" value="F:low-density lipoprotein particle binding"/>
    <property type="evidence" value="ECO:0000250"/>
    <property type="project" value="UniProtKB"/>
</dbReference>
<dbReference type="GO" id="GO:0046872">
    <property type="term" value="F:metal ion binding"/>
    <property type="evidence" value="ECO:0007669"/>
    <property type="project" value="UniProtKB-KW"/>
</dbReference>
<dbReference type="GO" id="GO:0038187">
    <property type="term" value="F:pattern recognition receptor activity"/>
    <property type="evidence" value="ECO:0000250"/>
    <property type="project" value="UniProtKB"/>
</dbReference>
<dbReference type="GO" id="GO:0005044">
    <property type="term" value="F:scavenger receptor activity"/>
    <property type="evidence" value="ECO:0007669"/>
    <property type="project" value="Ensembl"/>
</dbReference>
<dbReference type="GO" id="GO:0071360">
    <property type="term" value="P:cellular response to exogenous dsRNA"/>
    <property type="evidence" value="ECO:0007669"/>
    <property type="project" value="Ensembl"/>
</dbReference>
<dbReference type="GO" id="GO:0042742">
    <property type="term" value="P:defense response to bacterium"/>
    <property type="evidence" value="ECO:0007669"/>
    <property type="project" value="Ensembl"/>
</dbReference>
<dbReference type="GO" id="GO:0006955">
    <property type="term" value="P:immune response"/>
    <property type="evidence" value="ECO:0000314"/>
    <property type="project" value="MGI"/>
</dbReference>
<dbReference type="GO" id="GO:0006910">
    <property type="term" value="P:phagocytosis, recognition"/>
    <property type="evidence" value="ECO:0000250"/>
    <property type="project" value="UniProtKB"/>
</dbReference>
<dbReference type="GO" id="GO:0044857">
    <property type="term" value="P:plasma membrane raft organization"/>
    <property type="evidence" value="ECO:0007669"/>
    <property type="project" value="Ensembl"/>
</dbReference>
<dbReference type="GO" id="GO:0034138">
    <property type="term" value="P:toll-like receptor 3 signaling pathway"/>
    <property type="evidence" value="ECO:0007669"/>
    <property type="project" value="Ensembl"/>
</dbReference>
<dbReference type="CDD" id="cd03590">
    <property type="entry name" value="CLECT_DC-SIGN_like"/>
    <property type="match status" value="1"/>
</dbReference>
<dbReference type="FunFam" id="3.10.100.10:FF:000017">
    <property type="entry name" value="collectin-12 isoform X1"/>
    <property type="match status" value="1"/>
</dbReference>
<dbReference type="Gene3D" id="3.10.100.10">
    <property type="entry name" value="Mannose-Binding Protein A, subunit A"/>
    <property type="match status" value="1"/>
</dbReference>
<dbReference type="InterPro" id="IPR001304">
    <property type="entry name" value="C-type_lectin-like"/>
</dbReference>
<dbReference type="InterPro" id="IPR016186">
    <property type="entry name" value="C-type_lectin-like/link_sf"/>
</dbReference>
<dbReference type="InterPro" id="IPR050111">
    <property type="entry name" value="C-type_lectin/snaclec_domain"/>
</dbReference>
<dbReference type="InterPro" id="IPR018378">
    <property type="entry name" value="C-type_lectin_CS"/>
</dbReference>
<dbReference type="InterPro" id="IPR033989">
    <property type="entry name" value="CD209-like_CTLD"/>
</dbReference>
<dbReference type="InterPro" id="IPR008160">
    <property type="entry name" value="Collagen"/>
</dbReference>
<dbReference type="InterPro" id="IPR016187">
    <property type="entry name" value="CTDL_fold"/>
</dbReference>
<dbReference type="PANTHER" id="PTHR22803">
    <property type="entry name" value="MANNOSE, PHOSPHOLIPASE, LECTIN RECEPTOR RELATED"/>
    <property type="match status" value="1"/>
</dbReference>
<dbReference type="Pfam" id="PF01391">
    <property type="entry name" value="Collagen"/>
    <property type="match status" value="3"/>
</dbReference>
<dbReference type="Pfam" id="PF00059">
    <property type="entry name" value="Lectin_C"/>
    <property type="match status" value="1"/>
</dbReference>
<dbReference type="SMART" id="SM00034">
    <property type="entry name" value="CLECT"/>
    <property type="match status" value="1"/>
</dbReference>
<dbReference type="SUPFAM" id="SSF56436">
    <property type="entry name" value="C-type lectin-like"/>
    <property type="match status" value="1"/>
</dbReference>
<dbReference type="PROSITE" id="PS00615">
    <property type="entry name" value="C_TYPE_LECTIN_1"/>
    <property type="match status" value="1"/>
</dbReference>
<dbReference type="PROSITE" id="PS50041">
    <property type="entry name" value="C_TYPE_LECTIN_2"/>
    <property type="match status" value="1"/>
</dbReference>
<organism>
    <name type="scientific">Mus musculus</name>
    <name type="common">Mouse</name>
    <dbReference type="NCBI Taxonomy" id="10090"/>
    <lineage>
        <taxon>Eukaryota</taxon>
        <taxon>Metazoa</taxon>
        <taxon>Chordata</taxon>
        <taxon>Craniata</taxon>
        <taxon>Vertebrata</taxon>
        <taxon>Euteleostomi</taxon>
        <taxon>Mammalia</taxon>
        <taxon>Eutheria</taxon>
        <taxon>Euarchontoglires</taxon>
        <taxon>Glires</taxon>
        <taxon>Rodentia</taxon>
        <taxon>Myomorpha</taxon>
        <taxon>Muroidea</taxon>
        <taxon>Muridae</taxon>
        <taxon>Murinae</taxon>
        <taxon>Mus</taxon>
        <taxon>Mus</taxon>
    </lineage>
</organism>
<proteinExistence type="evidence at protein level"/>